<accession>Q8SPU6</accession>
<proteinExistence type="evidence at transcript level"/>
<reference key="1">
    <citation type="journal article" date="1997" name="J. Neurochem.">
        <title>Neuronal nicotinic acetylcholine receptors on bovine chromaffin cells: cloning, expression, and genomic organization of receptor subunits.</title>
        <authorList>
            <person name="Campos-Caro A."/>
            <person name="Smillie F.I."/>
            <person name="Dominguez del Toro E."/>
            <person name="Rovira J.C."/>
            <person name="Vicente-Agullo F."/>
            <person name="Chapuli J."/>
            <person name="Juiz J.M."/>
            <person name="Sala S."/>
            <person name="Sala F."/>
            <person name="Ballesta J.J."/>
            <person name="Criado M."/>
        </authorList>
    </citation>
    <scope>NUCLEOTIDE SEQUENCE [MRNA]</scope>
    <source>
        <tissue>Adrenal medulla</tissue>
    </source>
</reference>
<comment type="function">
    <text evidence="4 6 7">Component of neuronal acetylcholine receptors (nAChRs) that function as pentameric, ligand-gated cation channels with high calcium permeability among other activities. nAChRs are excitatory neurotrasnmitter receptors formed by a collection of nAChR subunits known to mediate synaptic transmission in the nervous system and the neuromuscular junction. Each nAchR subunit confers differential attributes to channel properties, including activation, deactivation and desensitization kinetics, pH sensitivity, cation permeability, and binding to allosteric modulators. CHRNB4 forms heteropentameric neuronal acetylcholine receptors with CHRNA2, CHRNA3 and CHRNA4, as well as CHRNA5 and CHRNB3 as accesory subunits. CHRNA3:CHRNB4 being predominant in neurons of the autonomic ganglia, it is known as ganglionic nicotinic receptor (By similarity). CHRNA3:CHRNB4 or CHRNA3:CHRNA5:CHRNB4 play also an important role in the habenulo-interpeduncular tract, modulating the mesolimbic dopamine system and affecting reward circuits and addiction (By similarity). Hypothalamic CHRNA3:CHRNB4 nAChR activation by nicotine leads to activation of POMC neurons and a decrease in food intake (By similarity).</text>
</comment>
<comment type="catalytic activity">
    <reaction evidence="6">
        <text>Ca(2+)(in) = Ca(2+)(out)</text>
        <dbReference type="Rhea" id="RHEA:29671"/>
        <dbReference type="ChEBI" id="CHEBI:29108"/>
    </reaction>
</comment>
<comment type="catalytic activity">
    <reaction evidence="3">
        <text>K(+)(in) = K(+)(out)</text>
        <dbReference type="Rhea" id="RHEA:29463"/>
        <dbReference type="ChEBI" id="CHEBI:29103"/>
    </reaction>
</comment>
<comment type="catalytic activity">
    <reaction evidence="5">
        <text>Na(+)(in) = Na(+)(out)</text>
        <dbReference type="Rhea" id="RHEA:34963"/>
        <dbReference type="ChEBI" id="CHEBI:29101"/>
    </reaction>
</comment>
<comment type="subunit">
    <text evidence="6">Neuronal AChR is composed of two different types of subunits: alpha and beta. CHRNB4/Beta-4 subunit can be combined to CHRNA2/alpha-2, CHRNA3/alpha-3 or CHRNA4/alpha-4, CHRNA5/alpha-5 and CHRNB3/beta-3 to give rise to functional receptors. Forms stoichiometries such as (CHRNA3)2:(CHRNB4)3 or (CHRNA3:CHRNB4)2:CHRNB3. Interacts with RIC3; which is required for proper folding and assembly. Interacts with LYPD6.</text>
</comment>
<comment type="subcellular location">
    <subcellularLocation>
        <location evidence="2">Synaptic cell membrane</location>
        <topology evidence="8">Multi-pass membrane protein</topology>
    </subcellularLocation>
    <subcellularLocation>
        <location evidence="2">Cell membrane</location>
        <topology evidence="8">Multi-pass membrane protein</topology>
    </subcellularLocation>
</comment>
<comment type="similarity">
    <text evidence="9">Belongs to the ligand-gated ion channel (TC 1.A.9) family. Acetylcholine receptor (TC 1.A.9.1) subfamily. Beta-4/CHRNB4 sub-subfamily.</text>
</comment>
<evidence type="ECO:0000250" key="1"/>
<evidence type="ECO:0000250" key="2">
    <source>
        <dbReference type="UniProtKB" id="P04757"/>
    </source>
</evidence>
<evidence type="ECO:0000250" key="3">
    <source>
        <dbReference type="UniProtKB" id="P04758"/>
    </source>
</evidence>
<evidence type="ECO:0000250" key="4">
    <source>
        <dbReference type="UniProtKB" id="P12392"/>
    </source>
</evidence>
<evidence type="ECO:0000250" key="5">
    <source>
        <dbReference type="UniProtKB" id="P17787"/>
    </source>
</evidence>
<evidence type="ECO:0000250" key="6">
    <source>
        <dbReference type="UniProtKB" id="P30926"/>
    </source>
</evidence>
<evidence type="ECO:0000250" key="7">
    <source>
        <dbReference type="UniProtKB" id="Q8R493"/>
    </source>
</evidence>
<evidence type="ECO:0000255" key="8"/>
<evidence type="ECO:0000305" key="9"/>
<name>ACHB4_BOVIN</name>
<protein>
    <recommendedName>
        <fullName>Neuronal acetylcholine receptor subunit beta-4</fullName>
    </recommendedName>
</protein>
<feature type="signal peptide" evidence="8">
    <location>
        <begin position="1"/>
        <end position="19"/>
    </location>
</feature>
<feature type="chain" id="PRO_0000000388" description="Neuronal acetylcholine receptor subunit beta-4">
    <location>
        <begin position="20"/>
        <end position="496"/>
    </location>
</feature>
<feature type="topological domain" description="Extracellular" evidence="8">
    <location>
        <begin position="20"/>
        <end position="236"/>
    </location>
</feature>
<feature type="transmembrane region" description="Helical" evidence="8">
    <location>
        <begin position="237"/>
        <end position="257"/>
    </location>
</feature>
<feature type="topological domain" description="Cytoplasmic" evidence="8">
    <location>
        <begin position="258"/>
        <end position="265"/>
    </location>
</feature>
<feature type="transmembrane region" description="Helical" evidence="8">
    <location>
        <begin position="266"/>
        <end position="286"/>
    </location>
</feature>
<feature type="topological domain" description="Extracellular" evidence="8">
    <location>
        <begin position="287"/>
        <end position="298"/>
    </location>
</feature>
<feature type="transmembrane region" description="Helical" evidence="8">
    <location>
        <begin position="299"/>
        <end position="319"/>
    </location>
</feature>
<feature type="topological domain" description="Cytoplasmic" evidence="8">
    <location>
        <begin position="320"/>
        <end position="464"/>
    </location>
</feature>
<feature type="transmembrane region" description="Helical" evidence="8">
    <location>
        <begin position="465"/>
        <end position="485"/>
    </location>
</feature>
<feature type="topological domain" description="Extracellular" evidence="8">
    <location>
        <begin position="486"/>
        <end position="496"/>
    </location>
</feature>
<feature type="binding site" evidence="6">
    <location>
        <position position="262"/>
    </location>
    <ligand>
        <name>Na(+)</name>
        <dbReference type="ChEBI" id="CHEBI:29101"/>
    </ligand>
</feature>
<feature type="site" description="Key residue that facilitates effective access of the conotoxin BuIA to the channel binding site" evidence="4">
    <location>
        <position position="82"/>
    </location>
</feature>
<feature type="glycosylation site" description="N-linked (GlcNAc...) asparagine" evidence="8">
    <location>
        <position position="36"/>
    </location>
</feature>
<feature type="glycosylation site" description="N-linked (GlcNAc...) asparagine" evidence="8">
    <location>
        <position position="93"/>
    </location>
</feature>
<feature type="glycosylation site" description="N-linked (GlcNAc...) asparagine" evidence="8">
    <location>
        <position position="138"/>
    </location>
</feature>
<feature type="glycosylation site" description="N-linked (GlcNAc...) asparagine" evidence="8">
    <location>
        <position position="166"/>
    </location>
</feature>
<feature type="disulfide bond" evidence="1">
    <location>
        <begin position="153"/>
        <end position="167"/>
    </location>
</feature>
<gene>
    <name type="primary">CHRNB4</name>
    <name type="synonym">ACRB4</name>
</gene>
<organism>
    <name type="scientific">Bos taurus</name>
    <name type="common">Bovine</name>
    <dbReference type="NCBI Taxonomy" id="9913"/>
    <lineage>
        <taxon>Eukaryota</taxon>
        <taxon>Metazoa</taxon>
        <taxon>Chordata</taxon>
        <taxon>Craniata</taxon>
        <taxon>Vertebrata</taxon>
        <taxon>Euteleostomi</taxon>
        <taxon>Mammalia</taxon>
        <taxon>Eutheria</taxon>
        <taxon>Laurasiatheria</taxon>
        <taxon>Artiodactyla</taxon>
        <taxon>Ruminantia</taxon>
        <taxon>Pecora</taxon>
        <taxon>Bovidae</taxon>
        <taxon>Bovinae</taxon>
        <taxon>Bos</taxon>
    </lineage>
</organism>
<sequence>MRSALPLVLFSLVALCGRGDCRVANAEEKLMDDLLNKTRYNNLIRPATSSSQLISIQLQLSLAQLISVNEREQIMTTNIWLKQEWTDYRLAWNSSRYEGVNILRIPANRVWLPDIVLYNNADGSYEVSLYTNVVVRSNGSVMWLPPAICKSACKIEVKHFPFDQQNCTLKFRSWTYDHTEIDMVLKMPTASMDDFTPSGEWDIVALPGRRTVNPQDPSYVDVTYDFIIKRKPLFYTINLIIPCVLITSLAILVFYLPSDCGEKMTLCISVLLALTVFLLLISKIVPPTSLNVPLIGKYLMFTMVLVTFSIVTSVCVLNVHHRSPSTHTMAPWVKRCFLHKLPTFLFIKRPRQQPSRAPQSSLARLTKSEATTTTTLAMGPTSSSNLYGNSMYFVNPGLAAPKSPVASDSAGIPRDFRLRSSGRFRQDVQEALEGVSFIAQHMKSDDLDQSVIEDWKYVAMVVDRLFLWVFVVVCVLGTVGLFLPPLFQTHTPSEEP</sequence>
<keyword id="KW-1003">Cell membrane</keyword>
<keyword id="KW-1015">Disulfide bond</keyword>
<keyword id="KW-0325">Glycoprotein</keyword>
<keyword id="KW-0407">Ion channel</keyword>
<keyword id="KW-0406">Ion transport</keyword>
<keyword id="KW-1071">Ligand-gated ion channel</keyword>
<keyword id="KW-0472">Membrane</keyword>
<keyword id="KW-0479">Metal-binding</keyword>
<keyword id="KW-0675">Receptor</keyword>
<keyword id="KW-1185">Reference proteome</keyword>
<keyword id="KW-0732">Signal</keyword>
<keyword id="KW-0915">Sodium</keyword>
<keyword id="KW-0770">Synapse</keyword>
<keyword id="KW-0812">Transmembrane</keyword>
<keyword id="KW-1133">Transmembrane helix</keyword>
<keyword id="KW-0813">Transport</keyword>
<dbReference type="EMBL" id="AF487465">
    <property type="protein sequence ID" value="AAL88712.1"/>
    <property type="molecule type" value="mRNA"/>
</dbReference>
<dbReference type="RefSeq" id="NP_776942.1">
    <property type="nucleotide sequence ID" value="NM_174517.1"/>
</dbReference>
<dbReference type="SMR" id="Q8SPU6"/>
<dbReference type="FunCoup" id="Q8SPU6">
    <property type="interactions" value="68"/>
</dbReference>
<dbReference type="STRING" id="9913.ENSBTAP00000048228"/>
<dbReference type="ChEMBL" id="CHEMBL3350221"/>
<dbReference type="GlyCosmos" id="Q8SPU6">
    <property type="glycosylation" value="4 sites, No reported glycans"/>
</dbReference>
<dbReference type="GlyGen" id="Q8SPU6">
    <property type="glycosylation" value="4 sites"/>
</dbReference>
<dbReference type="PaxDb" id="9913-ENSBTAP00000048228"/>
<dbReference type="GeneID" id="282181"/>
<dbReference type="KEGG" id="bta:282181"/>
<dbReference type="CTD" id="1143"/>
<dbReference type="eggNOG" id="KOG3645">
    <property type="taxonomic scope" value="Eukaryota"/>
</dbReference>
<dbReference type="InParanoid" id="Q8SPU6"/>
<dbReference type="OrthoDB" id="5975154at2759"/>
<dbReference type="Proteomes" id="UP000009136">
    <property type="component" value="Unplaced"/>
</dbReference>
<dbReference type="GO" id="GO:0005892">
    <property type="term" value="C:acetylcholine-gated channel complex"/>
    <property type="evidence" value="ECO:0000318"/>
    <property type="project" value="GO_Central"/>
</dbReference>
<dbReference type="GO" id="GO:0043005">
    <property type="term" value="C:neuron projection"/>
    <property type="evidence" value="ECO:0000318"/>
    <property type="project" value="GO_Central"/>
</dbReference>
<dbReference type="GO" id="GO:0005886">
    <property type="term" value="C:plasma membrane"/>
    <property type="evidence" value="ECO:0000318"/>
    <property type="project" value="GO_Central"/>
</dbReference>
<dbReference type="GO" id="GO:0045211">
    <property type="term" value="C:postsynaptic membrane"/>
    <property type="evidence" value="ECO:0007669"/>
    <property type="project" value="UniProtKB-KW"/>
</dbReference>
<dbReference type="GO" id="GO:0045202">
    <property type="term" value="C:synapse"/>
    <property type="evidence" value="ECO:0000318"/>
    <property type="project" value="GO_Central"/>
</dbReference>
<dbReference type="GO" id="GO:0015464">
    <property type="term" value="F:acetylcholine receptor activity"/>
    <property type="evidence" value="ECO:0000318"/>
    <property type="project" value="GO_Central"/>
</dbReference>
<dbReference type="GO" id="GO:0022848">
    <property type="term" value="F:acetylcholine-gated monoatomic cation-selective channel activity"/>
    <property type="evidence" value="ECO:0000318"/>
    <property type="project" value="GO_Central"/>
</dbReference>
<dbReference type="GO" id="GO:0095500">
    <property type="term" value="P:acetylcholine receptor signaling pathway"/>
    <property type="evidence" value="ECO:0000318"/>
    <property type="project" value="GO_Central"/>
</dbReference>
<dbReference type="GO" id="GO:0007268">
    <property type="term" value="P:chemical synaptic transmission"/>
    <property type="evidence" value="ECO:0000318"/>
    <property type="project" value="GO_Central"/>
</dbReference>
<dbReference type="GO" id="GO:0051899">
    <property type="term" value="P:membrane depolarization"/>
    <property type="evidence" value="ECO:0000318"/>
    <property type="project" value="GO_Central"/>
</dbReference>
<dbReference type="GO" id="GO:0034220">
    <property type="term" value="P:monoatomic ion transmembrane transport"/>
    <property type="evidence" value="ECO:0000318"/>
    <property type="project" value="GO_Central"/>
</dbReference>
<dbReference type="CDD" id="cd19064">
    <property type="entry name" value="LGIC_TM_nAChR"/>
    <property type="match status" value="1"/>
</dbReference>
<dbReference type="FunFam" id="2.70.170.10:FF:000006">
    <property type="entry name" value="Cholinergic receptor nicotinic beta 2 subunit"/>
    <property type="match status" value="1"/>
</dbReference>
<dbReference type="FunFam" id="1.20.58.390:FF:000008">
    <property type="entry name" value="Cholinergic receptor nicotinic beta 4 subunit"/>
    <property type="match status" value="1"/>
</dbReference>
<dbReference type="FunFam" id="1.20.58.390:FF:000034">
    <property type="entry name" value="Cholinergic receptor nicotinic beta 4 subunit"/>
    <property type="match status" value="1"/>
</dbReference>
<dbReference type="Gene3D" id="2.70.170.10">
    <property type="entry name" value="Neurotransmitter-gated ion-channel ligand-binding domain"/>
    <property type="match status" value="1"/>
</dbReference>
<dbReference type="Gene3D" id="1.20.58.390">
    <property type="entry name" value="Neurotransmitter-gated ion-channel transmembrane domain"/>
    <property type="match status" value="2"/>
</dbReference>
<dbReference type="InterPro" id="IPR006202">
    <property type="entry name" value="Neur_chan_lig-bd"/>
</dbReference>
<dbReference type="InterPro" id="IPR036734">
    <property type="entry name" value="Neur_chan_lig-bd_sf"/>
</dbReference>
<dbReference type="InterPro" id="IPR006201">
    <property type="entry name" value="Neur_channel"/>
</dbReference>
<dbReference type="InterPro" id="IPR036719">
    <property type="entry name" value="Neuro-gated_channel_TM_sf"/>
</dbReference>
<dbReference type="InterPro" id="IPR038050">
    <property type="entry name" value="Neuro_actylchol_rec"/>
</dbReference>
<dbReference type="InterPro" id="IPR006029">
    <property type="entry name" value="Neurotrans-gated_channel_TM"/>
</dbReference>
<dbReference type="InterPro" id="IPR018000">
    <property type="entry name" value="Neurotransmitter_ion_chnl_CS"/>
</dbReference>
<dbReference type="InterPro" id="IPR002394">
    <property type="entry name" value="Nicotinic_acetylcholine_rcpt"/>
</dbReference>
<dbReference type="NCBIfam" id="TIGR00860">
    <property type="entry name" value="LIC"/>
    <property type="match status" value="1"/>
</dbReference>
<dbReference type="PANTHER" id="PTHR18945">
    <property type="entry name" value="NEUROTRANSMITTER GATED ION CHANNEL"/>
    <property type="match status" value="1"/>
</dbReference>
<dbReference type="Pfam" id="PF02931">
    <property type="entry name" value="Neur_chan_LBD"/>
    <property type="match status" value="1"/>
</dbReference>
<dbReference type="Pfam" id="PF02932">
    <property type="entry name" value="Neur_chan_memb"/>
    <property type="match status" value="1"/>
</dbReference>
<dbReference type="PRINTS" id="PR00254">
    <property type="entry name" value="NICOTINICR"/>
</dbReference>
<dbReference type="PRINTS" id="PR00252">
    <property type="entry name" value="NRIONCHANNEL"/>
</dbReference>
<dbReference type="SUPFAM" id="SSF90112">
    <property type="entry name" value="Neurotransmitter-gated ion-channel transmembrane pore"/>
    <property type="match status" value="1"/>
</dbReference>
<dbReference type="SUPFAM" id="SSF63712">
    <property type="entry name" value="Nicotinic receptor ligand binding domain-like"/>
    <property type="match status" value="1"/>
</dbReference>
<dbReference type="PROSITE" id="PS00236">
    <property type="entry name" value="NEUROTR_ION_CHANNEL"/>
    <property type="match status" value="1"/>
</dbReference>